<keyword id="KW-0472">Membrane</keyword>
<keyword id="KW-0496">Mitochondrion</keyword>
<keyword id="KW-1185">Reference proteome</keyword>
<keyword id="KW-0812">Transmembrane</keyword>
<keyword id="KW-1133">Transmembrane helix</keyword>
<proteinExistence type="evidence at protein level"/>
<dbReference type="EMBL" id="Z23261">
    <property type="protein sequence ID" value="CAA80788.1"/>
    <property type="molecule type" value="Genomic_DNA"/>
</dbReference>
<dbReference type="EMBL" id="Z35820">
    <property type="protein sequence ID" value="CAA84879.1"/>
    <property type="molecule type" value="Genomic_DNA"/>
</dbReference>
<dbReference type="EMBL" id="BK006936">
    <property type="protein sequence ID" value="DAA07061.1"/>
    <property type="molecule type" value="Genomic_DNA"/>
</dbReference>
<dbReference type="PIR" id="S39829">
    <property type="entry name" value="S39829"/>
</dbReference>
<dbReference type="BioGRID" id="32640">
    <property type="interactions" value="116"/>
</dbReference>
<dbReference type="DIP" id="DIP-2044N"/>
<dbReference type="FunCoup" id="P34224">
    <property type="interactions" value="28"/>
</dbReference>
<dbReference type="IntAct" id="P34224">
    <property type="interactions" value="1"/>
</dbReference>
<dbReference type="MINT" id="P34224"/>
<dbReference type="STRING" id="4932.YBL059W"/>
<dbReference type="PaxDb" id="4932-YBL059W"/>
<dbReference type="PeptideAtlas" id="P34224"/>
<dbReference type="EnsemblFungi" id="YBL059W_mRNA">
    <property type="protein sequence ID" value="YBL059W"/>
    <property type="gene ID" value="YBL059W"/>
</dbReference>
<dbReference type="KEGG" id="sce:YBL059W"/>
<dbReference type="AGR" id="SGD:S000000155"/>
<dbReference type="SGD" id="S000000155">
    <property type="gene designation" value="YBL059W"/>
</dbReference>
<dbReference type="VEuPathDB" id="FungiDB:YBL059W"/>
<dbReference type="eggNOG" id="ENOG502SD3V">
    <property type="taxonomic scope" value="Eukaryota"/>
</dbReference>
<dbReference type="GeneTree" id="ENSGT00940000176820"/>
<dbReference type="HOGENOM" id="CLU_118700_0_0_1"/>
<dbReference type="InParanoid" id="P34224"/>
<dbReference type="OMA" id="ITCRIAM"/>
<dbReference type="OrthoDB" id="4088121at2759"/>
<dbReference type="BioCyc" id="YEAST:G3O-28957-MONOMER"/>
<dbReference type="BioGRID-ORCS" id="852221">
    <property type="hits" value="0 hits in 10 CRISPR screens"/>
</dbReference>
<dbReference type="PRO" id="PR:P34224"/>
<dbReference type="Proteomes" id="UP000002311">
    <property type="component" value="Chromosome II"/>
</dbReference>
<dbReference type="RNAct" id="P34224">
    <property type="molecule type" value="protein"/>
</dbReference>
<dbReference type="GO" id="GO:0031966">
    <property type="term" value="C:mitochondrial membrane"/>
    <property type="evidence" value="ECO:0007669"/>
    <property type="project" value="UniProtKB-SubCell"/>
</dbReference>
<dbReference type="GO" id="GO:0005739">
    <property type="term" value="C:mitochondrion"/>
    <property type="evidence" value="ECO:0007005"/>
    <property type="project" value="SGD"/>
</dbReference>
<dbReference type="InterPro" id="IPR038814">
    <property type="entry name" value="AIM11"/>
</dbReference>
<dbReference type="PANTHER" id="PTHR39136">
    <property type="entry name" value="ALTERED INHERITANCE OF MITOCHONDRIA PROTEIN 11"/>
    <property type="match status" value="1"/>
</dbReference>
<dbReference type="PANTHER" id="PTHR39136:SF1">
    <property type="entry name" value="ALTERED INHERITANCE OF MITOCHONDRIA PROTEIN 11"/>
    <property type="match status" value="1"/>
</dbReference>
<feature type="chain" id="PRO_0000202454" description="Uncharacterized protein YBL059W">
    <location>
        <begin position="1"/>
        <end position="193"/>
    </location>
</feature>
<feature type="transmembrane region" description="Helical" evidence="1">
    <location>
        <begin position="119"/>
        <end position="143"/>
    </location>
</feature>
<evidence type="ECO:0000255" key="1"/>
<evidence type="ECO:0000269" key="2">
    <source>
    </source>
</evidence>
<evidence type="ECO:0000269" key="3">
    <source>
    </source>
</evidence>
<name>YBF9_YEAST</name>
<sequence>MLLDAQRFFNRSFSINVICELKHNVNTRRKFEIKDWPTIMLVSRNDKPKISSEEVTHFIDDYKKRRKTQMTRFFGITIFTLITCRIAMKKMITAKVPLNTFQANYASRTQTITHTQKSLAGSLLAATGMTLGIFGMGITGTCWSWDVSSFQELKQRLERRANNEFVVTNMPLDKRSQQVVDSLVKTHNSSLCK</sequence>
<protein>
    <recommendedName>
        <fullName>Uncharacterized protein YBL059W</fullName>
    </recommendedName>
</protein>
<gene>
    <name type="ordered locus">YBL059W</name>
    <name type="ORF">YBL0508</name>
    <name type="ORF">YBL0516</name>
</gene>
<organism>
    <name type="scientific">Saccharomyces cerevisiae (strain ATCC 204508 / S288c)</name>
    <name type="common">Baker's yeast</name>
    <dbReference type="NCBI Taxonomy" id="559292"/>
    <lineage>
        <taxon>Eukaryota</taxon>
        <taxon>Fungi</taxon>
        <taxon>Dikarya</taxon>
        <taxon>Ascomycota</taxon>
        <taxon>Saccharomycotina</taxon>
        <taxon>Saccharomycetes</taxon>
        <taxon>Saccharomycetales</taxon>
        <taxon>Saccharomycetaceae</taxon>
        <taxon>Saccharomyces</taxon>
    </lineage>
</organism>
<reference key="1">
    <citation type="journal article" date="1993" name="Yeast">
        <title>Sequencing and functional analysis of a 32,560 bp segment on the left arm of yeast chromosome II. Identification of 26 open reading frames, including the KIP1 and SEC17 genes.</title>
        <authorList>
            <person name="Scherens B."/>
            <person name="el Bakkoury M."/>
            <person name="Vierendeels F."/>
            <person name="Dubois E."/>
            <person name="Messenguy F."/>
        </authorList>
    </citation>
    <scope>NUCLEOTIDE SEQUENCE [GENOMIC DNA]</scope>
    <source>
        <strain>ATCC 204508 / S288c</strain>
    </source>
</reference>
<reference key="2">
    <citation type="journal article" date="1994" name="EMBO J.">
        <title>Complete DNA sequence of yeast chromosome II.</title>
        <authorList>
            <person name="Feldmann H."/>
            <person name="Aigle M."/>
            <person name="Aljinovic G."/>
            <person name="Andre B."/>
            <person name="Baclet M.C."/>
            <person name="Barthe C."/>
            <person name="Baur A."/>
            <person name="Becam A.-M."/>
            <person name="Biteau N."/>
            <person name="Boles E."/>
            <person name="Brandt T."/>
            <person name="Brendel M."/>
            <person name="Brueckner M."/>
            <person name="Bussereau F."/>
            <person name="Christiansen C."/>
            <person name="Contreras R."/>
            <person name="Crouzet M."/>
            <person name="Cziepluch C."/>
            <person name="Demolis N."/>
            <person name="Delaveau T."/>
            <person name="Doignon F."/>
            <person name="Domdey H."/>
            <person name="Duesterhus S."/>
            <person name="Dubois E."/>
            <person name="Dujon B."/>
            <person name="El Bakkoury M."/>
            <person name="Entian K.-D."/>
            <person name="Feuermann M."/>
            <person name="Fiers W."/>
            <person name="Fobo G.M."/>
            <person name="Fritz C."/>
            <person name="Gassenhuber J."/>
            <person name="Glansdorff N."/>
            <person name="Goffeau A."/>
            <person name="Grivell L.A."/>
            <person name="de Haan M."/>
            <person name="Hein C."/>
            <person name="Herbert C.J."/>
            <person name="Hollenberg C.P."/>
            <person name="Holmstroem K."/>
            <person name="Jacq C."/>
            <person name="Jacquet M."/>
            <person name="Jauniaux J.-C."/>
            <person name="Jonniaux J.-L."/>
            <person name="Kallesoee T."/>
            <person name="Kiesau P."/>
            <person name="Kirchrath L."/>
            <person name="Koetter P."/>
            <person name="Korol S."/>
            <person name="Liebl S."/>
            <person name="Logghe M."/>
            <person name="Lohan A.J.E."/>
            <person name="Louis E.J."/>
            <person name="Li Z.Y."/>
            <person name="Maat M.J."/>
            <person name="Mallet L."/>
            <person name="Mannhaupt G."/>
            <person name="Messenguy F."/>
            <person name="Miosga T."/>
            <person name="Molemans F."/>
            <person name="Mueller S."/>
            <person name="Nasr F."/>
            <person name="Obermaier B."/>
            <person name="Perea J."/>
            <person name="Pierard A."/>
            <person name="Piravandi E."/>
            <person name="Pohl F.M."/>
            <person name="Pohl T.M."/>
            <person name="Potier S."/>
            <person name="Proft M."/>
            <person name="Purnelle B."/>
            <person name="Ramezani Rad M."/>
            <person name="Rieger M."/>
            <person name="Rose M."/>
            <person name="Schaaff-Gerstenschlaeger I."/>
            <person name="Scherens B."/>
            <person name="Schwarzlose C."/>
            <person name="Skala J."/>
            <person name="Slonimski P.P."/>
            <person name="Smits P.H.M."/>
            <person name="Souciet J.-L."/>
            <person name="Steensma H.Y."/>
            <person name="Stucka R."/>
            <person name="Urrestarazu L.A."/>
            <person name="van der Aart Q.J.M."/>
            <person name="Van Dyck L."/>
            <person name="Vassarotti A."/>
            <person name="Vetter I."/>
            <person name="Vierendeels F."/>
            <person name="Vissers S."/>
            <person name="Wagner G."/>
            <person name="de Wergifosse P."/>
            <person name="Wolfe K.H."/>
            <person name="Zagulski M."/>
            <person name="Zimmermann F.K."/>
            <person name="Mewes H.-W."/>
            <person name="Kleine K."/>
        </authorList>
    </citation>
    <scope>NUCLEOTIDE SEQUENCE [LARGE SCALE GENOMIC DNA]</scope>
    <source>
        <strain>ATCC 204508 / S288c</strain>
    </source>
</reference>
<reference key="3">
    <citation type="journal article" date="2014" name="G3 (Bethesda)">
        <title>The reference genome sequence of Saccharomyces cerevisiae: Then and now.</title>
        <authorList>
            <person name="Engel S.R."/>
            <person name="Dietrich F.S."/>
            <person name="Fisk D.G."/>
            <person name="Binkley G."/>
            <person name="Balakrishnan R."/>
            <person name="Costanzo M.C."/>
            <person name="Dwight S.S."/>
            <person name="Hitz B.C."/>
            <person name="Karra K."/>
            <person name="Nash R.S."/>
            <person name="Weng S."/>
            <person name="Wong E.D."/>
            <person name="Lloyd P."/>
            <person name="Skrzypek M.S."/>
            <person name="Miyasato S.R."/>
            <person name="Simison M."/>
            <person name="Cherry J.M."/>
        </authorList>
    </citation>
    <scope>GENOME REANNOTATION</scope>
    <source>
        <strain>ATCC 204508 / S288c</strain>
    </source>
</reference>
<reference key="4">
    <citation type="journal article" date="2003" name="Nature">
        <title>Global analysis of protein expression in yeast.</title>
        <authorList>
            <person name="Ghaemmaghami S."/>
            <person name="Huh W.-K."/>
            <person name="Bower K."/>
            <person name="Howson R.W."/>
            <person name="Belle A."/>
            <person name="Dephoure N."/>
            <person name="O'Shea E.K."/>
            <person name="Weissman J.S."/>
        </authorList>
    </citation>
    <scope>LEVEL OF PROTEIN EXPRESSION [LARGE SCALE ANALYSIS]</scope>
</reference>
<reference key="5">
    <citation type="journal article" date="2006" name="J. Proteome Res.">
        <title>Toward the complete yeast mitochondrial proteome: multidimensional separation techniques for mitochondrial proteomics.</title>
        <authorList>
            <person name="Reinders J."/>
            <person name="Zahedi R.P."/>
            <person name="Pfanner N."/>
            <person name="Meisinger C."/>
            <person name="Sickmann A."/>
        </authorList>
    </citation>
    <scope>SUBCELLULAR LOCATION [LARGE SCALE ANALYSIS]</scope>
    <scope>IDENTIFICATION BY MASS SPECTROMETRY</scope>
</reference>
<accession>P34224</accession>
<accession>D6VPU1</accession>
<comment type="subcellular location">
    <subcellularLocation>
        <location evidence="3">Mitochondrion membrane</location>
        <topology evidence="3">Single-pass membrane protein</topology>
    </subcellularLocation>
</comment>
<comment type="miscellaneous">
    <text evidence="2">Present with 623 molecules/cell in log phase SD medium.</text>
</comment>